<protein>
    <recommendedName>
        <fullName>CAP-Gly domain-containing linker protein 2</fullName>
    </recommendedName>
    <alternativeName>
        <fullName>Cytoplasmic linker protein 115</fullName>
        <shortName>CLIP-115</shortName>
    </alternativeName>
    <alternativeName>
        <fullName>Cytoplasmic linker protein 2</fullName>
    </alternativeName>
</protein>
<organism>
    <name type="scientific">Mus musculus</name>
    <name type="common">Mouse</name>
    <dbReference type="NCBI Taxonomy" id="10090"/>
    <lineage>
        <taxon>Eukaryota</taxon>
        <taxon>Metazoa</taxon>
        <taxon>Chordata</taxon>
        <taxon>Craniata</taxon>
        <taxon>Vertebrata</taxon>
        <taxon>Euteleostomi</taxon>
        <taxon>Mammalia</taxon>
        <taxon>Eutheria</taxon>
        <taxon>Euarchontoglires</taxon>
        <taxon>Glires</taxon>
        <taxon>Rodentia</taxon>
        <taxon>Myomorpha</taxon>
        <taxon>Muroidea</taxon>
        <taxon>Muridae</taxon>
        <taxon>Murinae</taxon>
        <taxon>Mus</taxon>
        <taxon>Mus</taxon>
    </lineage>
</organism>
<keyword id="KW-0025">Alternative splicing</keyword>
<keyword id="KW-0175">Coiled coil</keyword>
<keyword id="KW-0963">Cytoplasm</keyword>
<keyword id="KW-0206">Cytoskeleton</keyword>
<keyword id="KW-0493">Microtubule</keyword>
<keyword id="KW-0597">Phosphoprotein</keyword>
<keyword id="KW-1185">Reference proteome</keyword>
<keyword id="KW-0677">Repeat</keyword>
<feature type="chain" id="PRO_0000083516" description="CAP-Gly domain-containing linker protein 2">
    <location>
        <begin position="1"/>
        <end position="1047"/>
    </location>
</feature>
<feature type="domain" description="CAP-Gly 1" evidence="5">
    <location>
        <begin position="100"/>
        <end position="142"/>
    </location>
</feature>
<feature type="domain" description="CAP-Gly 2" evidence="5">
    <location>
        <begin position="240"/>
        <end position="282"/>
    </location>
</feature>
<feature type="region of interest" description="Disordered" evidence="6">
    <location>
        <begin position="1"/>
        <end position="71"/>
    </location>
</feature>
<feature type="region of interest" description="Disordered" evidence="6">
    <location>
        <begin position="144"/>
        <end position="164"/>
    </location>
</feature>
<feature type="region of interest" description="Disordered" evidence="6">
    <location>
        <begin position="196"/>
        <end position="216"/>
    </location>
</feature>
<feature type="region of interest" description="Disordered" evidence="6">
    <location>
        <begin position="314"/>
        <end position="340"/>
    </location>
</feature>
<feature type="region of interest" description="Disordered" evidence="6">
    <location>
        <begin position="1022"/>
        <end position="1047"/>
    </location>
</feature>
<feature type="coiled-coil region" evidence="4">
    <location>
        <begin position="355"/>
        <end position="525"/>
    </location>
</feature>
<feature type="coiled-coil region" evidence="4">
    <location>
        <begin position="564"/>
        <end position="637"/>
    </location>
</feature>
<feature type="coiled-coil region" evidence="4">
    <location>
        <begin position="677"/>
        <end position="1017"/>
    </location>
</feature>
<feature type="compositionally biased region" description="Low complexity" evidence="6">
    <location>
        <begin position="17"/>
        <end position="39"/>
    </location>
</feature>
<feature type="compositionally biased region" description="Low complexity" evidence="6">
    <location>
        <begin position="49"/>
        <end position="62"/>
    </location>
</feature>
<feature type="compositionally biased region" description="Polar residues" evidence="6">
    <location>
        <begin position="196"/>
        <end position="211"/>
    </location>
</feature>
<feature type="compositionally biased region" description="Low complexity" evidence="6">
    <location>
        <begin position="315"/>
        <end position="339"/>
    </location>
</feature>
<feature type="compositionally biased region" description="Polar residues" evidence="6">
    <location>
        <begin position="1022"/>
        <end position="1033"/>
    </location>
</feature>
<feature type="compositionally biased region" description="Basic and acidic residues" evidence="6">
    <location>
        <begin position="1036"/>
        <end position="1047"/>
    </location>
</feature>
<feature type="modified residue" description="Phosphoserine" evidence="12">
    <location>
        <position position="50"/>
    </location>
</feature>
<feature type="modified residue" description="Phosphoserine" evidence="2">
    <location>
        <position position="203"/>
    </location>
</feature>
<feature type="modified residue" description="Phosphoserine" evidence="12">
    <location>
        <position position="208"/>
    </location>
</feature>
<feature type="modified residue" description="Phosphoserine" evidence="12">
    <location>
        <position position="212"/>
    </location>
</feature>
<feature type="modified residue" description="Phosphoserine" evidence="12">
    <location>
        <position position="315"/>
    </location>
</feature>
<feature type="modified residue" description="Phosphoserine" evidence="3">
    <location>
        <position position="924"/>
    </location>
</feature>
<feature type="modified residue" description="Phosphoserine" evidence="12">
    <location>
        <position position="974"/>
    </location>
</feature>
<feature type="modified residue" description="Phosphoserine" evidence="12">
    <location>
        <position position="980"/>
    </location>
</feature>
<feature type="splice variant" id="VSP_015683" description="In isoform 2." evidence="10">
    <location>
        <begin position="462"/>
        <end position="496"/>
    </location>
</feature>
<feature type="sequence conflict" description="In Ref. 3; AAH39162." evidence="11" ref="3">
    <original>V</original>
    <variation>I</variation>
    <location>
        <position position="25"/>
    </location>
</feature>
<feature type="sequence conflict" description="In Ref. 1; CAA13068/CAA13069." evidence="11" ref="1">
    <original>T</original>
    <variation>A</variation>
    <location>
        <position position="59"/>
    </location>
</feature>
<feature type="sequence conflict" description="In Ref. 1; CAA13068/CAA13069." evidence="11" ref="1">
    <original>D</original>
    <variation>H</variation>
    <location>
        <position position="79"/>
    </location>
</feature>
<feature type="sequence conflict" description="In Ref. 1; CAA13068/CAA13069." evidence="11" ref="1">
    <original>G</original>
    <variation>A</variation>
    <location>
        <position position="127"/>
    </location>
</feature>
<feature type="sequence conflict" description="In Ref. 1; CAA13068/CAA13069." evidence="11" ref="1">
    <original>RP</original>
    <variation>PA</variation>
    <location>
        <begin position="334"/>
        <end position="335"/>
    </location>
</feature>
<feature type="sequence conflict" description="In Ref. 1; CAA13068/CAA13069." evidence="11" ref="1">
    <original>T</original>
    <variation>I</variation>
    <location>
        <position position="356"/>
    </location>
</feature>
<feature type="sequence conflict" description="In Ref. 1; CAA13068/CAA13069." evidence="11" ref="1">
    <original>R</original>
    <variation>D</variation>
    <location>
        <position position="559"/>
    </location>
</feature>
<feature type="sequence conflict" description="In Ref. 1; CAA13068." evidence="11" ref="1">
    <original>SQHRLEL</original>
    <variation>AASAEA</variation>
    <location>
        <begin position="713"/>
        <end position="719"/>
    </location>
</feature>
<feature type="sequence conflict" description="In Ref. 1; CAA13068/CAA13069." evidence="11" ref="1">
    <original>A</original>
    <variation>V</variation>
    <location>
        <position position="733"/>
    </location>
</feature>
<feature type="sequence conflict" description="In Ref. 1; CAA13068/CAA13069." evidence="11" ref="1">
    <original>A</original>
    <variation>V</variation>
    <location>
        <position position="856"/>
    </location>
</feature>
<feature type="sequence conflict" description="In Ref. 3; AAH39162." evidence="11" ref="3">
    <original>N</original>
    <variation>D</variation>
    <location>
        <position position="1003"/>
    </location>
</feature>
<reference key="1">
    <citation type="journal article" date="1998" name="Genomics">
        <title>The murine CYLN2 gene: genomic organization, chromosome localization, and comparison to the human gene that is located within the 7q11.23 Williams syndrome critical region.</title>
        <authorList>
            <person name="Hoogenraad C.C."/>
            <person name="Eussen B.H.J."/>
            <person name="Langeveld A."/>
            <person name="van Haperen R."/>
            <person name="Winterberg S."/>
            <person name="Wouters C.H."/>
            <person name="Grosveld F."/>
            <person name="de Zeeuw C.I."/>
            <person name="Galjart N."/>
        </authorList>
    </citation>
    <scope>NUCLEOTIDE SEQUENCE [GENOMIC DNA]</scope>
    <source>
        <strain>129</strain>
    </source>
</reference>
<reference key="2">
    <citation type="submission" date="2000-07" db="EMBL/GenBank/DDBJ databases">
        <authorList>
            <person name="Green E.D."/>
        </authorList>
    </citation>
    <scope>NUCLEOTIDE SEQUENCE [GENOMIC DNA]</scope>
    <source>
        <strain>129/Sv</strain>
    </source>
</reference>
<reference key="3">
    <citation type="journal article" date="2004" name="Genome Res.">
        <title>The status, quality, and expansion of the NIH full-length cDNA project: the Mammalian Gene Collection (MGC).</title>
        <authorList>
            <consortium name="The MGC Project Team"/>
        </authorList>
    </citation>
    <scope>NUCLEOTIDE SEQUENCE [LARGE SCALE MRNA] (ISOFORM 2)</scope>
    <source>
        <strain>C57BL/6J</strain>
        <strain>FVB/N</strain>
        <tissue>Brain</tissue>
        <tissue>Mammary tumor</tissue>
    </source>
</reference>
<reference key="4">
    <citation type="journal article" date="2001" name="Cell">
        <title>Clasps are CLIP-115 and -170 associating proteins involved in the regional regulation of microtubule dynamics in motile fibroblasts.</title>
        <authorList>
            <person name="Akhmanova A."/>
            <person name="Hoogenraad C.C."/>
            <person name="Drabek K."/>
            <person name="Stepanova T."/>
            <person name="Dortland B."/>
            <person name="Verkerk T."/>
            <person name="Vermeulen W."/>
            <person name="Burgering B.M."/>
            <person name="de Zeeuw C.I."/>
            <person name="Grosveld F."/>
            <person name="Galjart N."/>
        </authorList>
    </citation>
    <scope>INTERACTION WITH CLASP1 AND CLASP2</scope>
</reference>
<reference key="5">
    <citation type="journal article" date="1997" name="Neuron">
        <title>CLIP-115, a novel brain specific cytoplasmic linker protein, mediates the localisation of dendritic lamellar bodies.</title>
        <authorList>
            <person name="de Zeeuw C.I."/>
            <person name="Hoogenraad C.C."/>
            <person name="Goedknegt E."/>
            <person name="Hertzberg E."/>
            <person name="Neubauer A."/>
            <person name="Grosveld F.G."/>
            <person name="Galjart N.J."/>
        </authorList>
    </citation>
    <scope>TISSUE SPECIFICITY</scope>
    <scope>DEVELOPMENTAL STAGE</scope>
</reference>
<reference key="6">
    <citation type="journal article" date="2006" name="J. Cell Biol.">
        <title>Tubulin tyrosination is a major factor affecting the recruitment of CAP-Gly proteins at microtubule plus ends.</title>
        <authorList>
            <person name="Peris L."/>
            <person name="Thery M."/>
            <person name="Faure J."/>
            <person name="Saoudi Y."/>
            <person name="Lafanechere L."/>
            <person name="Chilton J.K."/>
            <person name="Gordon-Weeks P."/>
            <person name="Galjart N."/>
            <person name="Bornens M."/>
            <person name="Wordeman L."/>
            <person name="Wehland J."/>
            <person name="Andrieux A."/>
            <person name="Job D."/>
        </authorList>
    </citation>
    <scope>SUBCELLULAR LOCATION</scope>
    <scope>ASSOCIATION WITH MICROTUBULES</scope>
</reference>
<reference key="7">
    <citation type="journal article" date="2010" name="Cell">
        <title>A tissue-specific atlas of mouse protein phosphorylation and expression.</title>
        <authorList>
            <person name="Huttlin E.L."/>
            <person name="Jedrychowski M.P."/>
            <person name="Elias J.E."/>
            <person name="Goswami T."/>
            <person name="Rad R."/>
            <person name="Beausoleil S.A."/>
            <person name="Villen J."/>
            <person name="Haas W."/>
            <person name="Sowa M.E."/>
            <person name="Gygi S.P."/>
        </authorList>
    </citation>
    <scope>PHOSPHORYLATION [LARGE SCALE ANALYSIS] AT SER-50; SER-208; SER-212; SER-315; SER-974 AND SER-980</scope>
    <scope>IDENTIFICATION BY MASS SPECTROMETRY [LARGE SCALE ANALYSIS]</scope>
    <source>
        <tissue>Brain</tissue>
        <tissue>Brown adipose tissue</tissue>
        <tissue>Heart</tissue>
        <tissue>Kidney</tissue>
        <tissue>Lung</tissue>
        <tissue>Pancreas</tissue>
        <tissue>Spleen</tissue>
    </source>
</reference>
<dbReference type="EMBL" id="AJ228863">
    <property type="protein sequence ID" value="CAA13068.1"/>
    <property type="molecule type" value="Genomic_DNA"/>
</dbReference>
<dbReference type="EMBL" id="AJ228865">
    <property type="protein sequence ID" value="CAA13069.1"/>
    <property type="molecule type" value="Genomic_DNA"/>
</dbReference>
<dbReference type="EMBL" id="AJ228868">
    <property type="protein sequence ID" value="CAA13069.1"/>
    <property type="status" value="JOINED"/>
    <property type="molecule type" value="Genomic_DNA"/>
</dbReference>
<dbReference type="EMBL" id="AJ228869">
    <property type="protein sequence ID" value="CAA13069.1"/>
    <property type="status" value="JOINED"/>
    <property type="molecule type" value="Genomic_DNA"/>
</dbReference>
<dbReference type="EMBL" id="AJ228870">
    <property type="protein sequence ID" value="CAA13069.1"/>
    <property type="status" value="JOINED"/>
    <property type="molecule type" value="Genomic_DNA"/>
</dbReference>
<dbReference type="EMBL" id="AJ228872">
    <property type="protein sequence ID" value="CAA13069.1"/>
    <property type="status" value="JOINED"/>
    <property type="molecule type" value="Genomic_DNA"/>
</dbReference>
<dbReference type="EMBL" id="AJ228876">
    <property type="protein sequence ID" value="CAA13069.1"/>
    <property type="status" value="JOINED"/>
    <property type="molecule type" value="Genomic_DNA"/>
</dbReference>
<dbReference type="EMBL" id="AJ228880">
    <property type="protein sequence ID" value="CAA13069.1"/>
    <property type="status" value="JOINED"/>
    <property type="molecule type" value="Genomic_DNA"/>
</dbReference>
<dbReference type="EMBL" id="AJ228867">
    <property type="protein sequence ID" value="CAA13069.1"/>
    <property type="status" value="JOINED"/>
    <property type="molecule type" value="Genomic_DNA"/>
</dbReference>
<dbReference type="EMBL" id="AJ228875">
    <property type="protein sequence ID" value="CAA13069.1"/>
    <property type="status" value="JOINED"/>
    <property type="molecule type" value="Genomic_DNA"/>
</dbReference>
<dbReference type="EMBL" id="AJ228871">
    <property type="protein sequence ID" value="CAA13069.1"/>
    <property type="status" value="JOINED"/>
    <property type="molecule type" value="Genomic_DNA"/>
</dbReference>
<dbReference type="EMBL" id="AJ228873">
    <property type="protein sequence ID" value="CAA13069.1"/>
    <property type="status" value="JOINED"/>
    <property type="molecule type" value="Genomic_DNA"/>
</dbReference>
<dbReference type="EMBL" id="AJ228877">
    <property type="protein sequence ID" value="CAA13069.1"/>
    <property type="status" value="JOINED"/>
    <property type="molecule type" value="Genomic_DNA"/>
</dbReference>
<dbReference type="EMBL" id="AJ228866">
    <property type="protein sequence ID" value="CAA13069.1"/>
    <property type="status" value="JOINED"/>
    <property type="molecule type" value="Genomic_DNA"/>
</dbReference>
<dbReference type="EMBL" id="AJ228879">
    <property type="protein sequence ID" value="CAA13069.1"/>
    <property type="status" value="JOINED"/>
    <property type="molecule type" value="Genomic_DNA"/>
</dbReference>
<dbReference type="EMBL" id="AJ228878">
    <property type="protein sequence ID" value="CAA13069.1"/>
    <property type="status" value="JOINED"/>
    <property type="molecule type" value="Genomic_DNA"/>
</dbReference>
<dbReference type="EMBL" id="AJ228874">
    <property type="protein sequence ID" value="CAA13069.1"/>
    <property type="status" value="JOINED"/>
    <property type="molecule type" value="Genomic_DNA"/>
</dbReference>
<dbReference type="EMBL" id="AF289667">
    <property type="protein sequence ID" value="AAF99340.1"/>
    <property type="molecule type" value="Genomic_DNA"/>
</dbReference>
<dbReference type="EMBL" id="AF289664">
    <property type="protein sequence ID" value="AAF99333.1"/>
    <property type="molecule type" value="Genomic_DNA"/>
</dbReference>
<dbReference type="EMBL" id="BC039162">
    <property type="protein sequence ID" value="AAH39162.1"/>
    <property type="molecule type" value="mRNA"/>
</dbReference>
<dbReference type="EMBL" id="BC053048">
    <property type="protein sequence ID" value="AAH53048.1"/>
    <property type="molecule type" value="mRNA"/>
</dbReference>
<dbReference type="CCDS" id="CCDS39309.1">
    <molecule id="Q9Z0H8-2"/>
</dbReference>
<dbReference type="CCDS" id="CCDS39310.1">
    <molecule id="Q9Z0H8-1"/>
</dbReference>
<dbReference type="PIR" id="T42720">
    <property type="entry name" value="T42720"/>
</dbReference>
<dbReference type="RefSeq" id="NP_001034251.1">
    <molecule id="Q9Z0H8-2"/>
    <property type="nucleotide sequence ID" value="NM_001039162.2"/>
</dbReference>
<dbReference type="RefSeq" id="NP_034120.2">
    <molecule id="Q9Z0H8-1"/>
    <property type="nucleotide sequence ID" value="NM_009990.3"/>
</dbReference>
<dbReference type="SMR" id="Q9Z0H8"/>
<dbReference type="BioGRID" id="234703">
    <property type="interactions" value="13"/>
</dbReference>
<dbReference type="FunCoup" id="Q9Z0H8">
    <property type="interactions" value="1557"/>
</dbReference>
<dbReference type="IntAct" id="Q9Z0H8">
    <property type="interactions" value="7"/>
</dbReference>
<dbReference type="MINT" id="Q9Z0H8"/>
<dbReference type="STRING" id="10090.ENSMUSP00000098212"/>
<dbReference type="GlyGen" id="Q9Z0H8">
    <property type="glycosylation" value="3 sites, 1 N-linked glycan (1 site), 1 O-linked glycan (2 sites)"/>
</dbReference>
<dbReference type="iPTMnet" id="Q9Z0H8"/>
<dbReference type="PhosphoSitePlus" id="Q9Z0H8"/>
<dbReference type="SwissPalm" id="Q9Z0H8"/>
<dbReference type="jPOST" id="Q9Z0H8"/>
<dbReference type="PaxDb" id="10090-ENSMUSP00000098212"/>
<dbReference type="PeptideAtlas" id="Q9Z0H8"/>
<dbReference type="ProteomicsDB" id="279107">
    <molecule id="Q9Z0H8-1"/>
</dbReference>
<dbReference type="ProteomicsDB" id="279108">
    <molecule id="Q9Z0H8-2"/>
</dbReference>
<dbReference type="Pumba" id="Q9Z0H8"/>
<dbReference type="Antibodypedia" id="14611">
    <property type="antibodies" value="157 antibodies from 25 providers"/>
</dbReference>
<dbReference type="DNASU" id="269713"/>
<dbReference type="Ensembl" id="ENSMUST00000036999.10">
    <molecule id="Q9Z0H8-2"/>
    <property type="protein sequence ID" value="ENSMUSP00000037431.7"/>
    <property type="gene ID" value="ENSMUSG00000063146.12"/>
</dbReference>
<dbReference type="Ensembl" id="ENSMUST00000100647.7">
    <molecule id="Q9Z0H8-1"/>
    <property type="protein sequence ID" value="ENSMUSP00000098212.3"/>
    <property type="gene ID" value="ENSMUSG00000063146.12"/>
</dbReference>
<dbReference type="GeneID" id="269713"/>
<dbReference type="KEGG" id="mmu:269713"/>
<dbReference type="UCSC" id="uc008zwi.2">
    <molecule id="Q9Z0H8-1"/>
    <property type="organism name" value="mouse"/>
</dbReference>
<dbReference type="UCSC" id="uc008zwj.2">
    <molecule id="Q9Z0H8-2"/>
    <property type="organism name" value="mouse"/>
</dbReference>
<dbReference type="AGR" id="MGI:1313136"/>
<dbReference type="CTD" id="7461"/>
<dbReference type="MGI" id="MGI:1313136">
    <property type="gene designation" value="Clip2"/>
</dbReference>
<dbReference type="VEuPathDB" id="HostDB:ENSMUSG00000063146"/>
<dbReference type="eggNOG" id="KOG4568">
    <property type="taxonomic scope" value="Eukaryota"/>
</dbReference>
<dbReference type="GeneTree" id="ENSGT00940000159426"/>
<dbReference type="HOGENOM" id="CLU_001753_0_0_1"/>
<dbReference type="InParanoid" id="Q9Z0H8"/>
<dbReference type="OMA" id="HMIESSD"/>
<dbReference type="OrthoDB" id="5295208at2759"/>
<dbReference type="PhylomeDB" id="Q9Z0H8"/>
<dbReference type="TreeFam" id="TF326096"/>
<dbReference type="BioGRID-ORCS" id="269713">
    <property type="hits" value="1 hit in 77 CRISPR screens"/>
</dbReference>
<dbReference type="CD-CODE" id="CE726F99">
    <property type="entry name" value="Postsynaptic density"/>
</dbReference>
<dbReference type="ChiTaRS" id="Clip2">
    <property type="organism name" value="mouse"/>
</dbReference>
<dbReference type="PRO" id="PR:Q9Z0H8"/>
<dbReference type="Proteomes" id="UP000000589">
    <property type="component" value="Chromosome 5"/>
</dbReference>
<dbReference type="RNAct" id="Q9Z0H8">
    <property type="molecule type" value="protein"/>
</dbReference>
<dbReference type="Bgee" id="ENSMUSG00000063146">
    <property type="expression patterns" value="Expressed in cortical plate and 127 other cell types or tissues"/>
</dbReference>
<dbReference type="GO" id="GO:0005737">
    <property type="term" value="C:cytoplasm"/>
    <property type="evidence" value="ECO:0007669"/>
    <property type="project" value="UniProtKB-SubCell"/>
</dbReference>
<dbReference type="GO" id="GO:0015630">
    <property type="term" value="C:microtubule cytoskeleton"/>
    <property type="evidence" value="ECO:0000314"/>
    <property type="project" value="MGI"/>
</dbReference>
<dbReference type="GO" id="GO:0035371">
    <property type="term" value="C:microtubule plus-end"/>
    <property type="evidence" value="ECO:0000314"/>
    <property type="project" value="UniProtKB"/>
</dbReference>
<dbReference type="GO" id="GO:0008017">
    <property type="term" value="F:microtubule binding"/>
    <property type="evidence" value="ECO:0000314"/>
    <property type="project" value="UniProtKB"/>
</dbReference>
<dbReference type="GO" id="GO:0051010">
    <property type="term" value="F:microtubule plus-end binding"/>
    <property type="evidence" value="ECO:0000314"/>
    <property type="project" value="MGI"/>
</dbReference>
<dbReference type="FunFam" id="2.30.30.190:FF:000002">
    <property type="entry name" value="CAP-Gly domain containing linker protein 1"/>
    <property type="match status" value="1"/>
</dbReference>
<dbReference type="FunFam" id="2.30.30.190:FF:000001">
    <property type="entry name" value="Putative CAP-Gly domain-containing linker protein 1"/>
    <property type="match status" value="1"/>
</dbReference>
<dbReference type="Gene3D" id="2.30.30.190">
    <property type="entry name" value="CAP Gly-rich-like domain"/>
    <property type="match status" value="2"/>
</dbReference>
<dbReference type="InterPro" id="IPR036859">
    <property type="entry name" value="CAP-Gly_dom_sf"/>
</dbReference>
<dbReference type="InterPro" id="IPR000938">
    <property type="entry name" value="CAP-Gly_domain"/>
</dbReference>
<dbReference type="PANTHER" id="PTHR18916:SF10">
    <property type="entry name" value="CAP-GLY DOMAIN-CONTAINING LINKER PROTEIN 2"/>
    <property type="match status" value="1"/>
</dbReference>
<dbReference type="PANTHER" id="PTHR18916">
    <property type="entry name" value="DYNACTIN 1-RELATED MICROTUBULE-BINDING"/>
    <property type="match status" value="1"/>
</dbReference>
<dbReference type="Pfam" id="PF01302">
    <property type="entry name" value="CAP_GLY"/>
    <property type="match status" value="2"/>
</dbReference>
<dbReference type="SMART" id="SM01052">
    <property type="entry name" value="CAP_GLY"/>
    <property type="match status" value="2"/>
</dbReference>
<dbReference type="SUPFAM" id="SSF74924">
    <property type="entry name" value="Cap-Gly domain"/>
    <property type="match status" value="2"/>
</dbReference>
<dbReference type="SUPFAM" id="SSF90257">
    <property type="entry name" value="Myosin rod fragments"/>
    <property type="match status" value="1"/>
</dbReference>
<dbReference type="PROSITE" id="PS00845">
    <property type="entry name" value="CAP_GLY_1"/>
    <property type="match status" value="2"/>
</dbReference>
<dbReference type="PROSITE" id="PS50245">
    <property type="entry name" value="CAP_GLY_2"/>
    <property type="match status" value="2"/>
</dbReference>
<comment type="function">
    <text evidence="1">Seems to link microtubules to dendritic lamellar body (DLB), a membranous organelle predominantly present in bulbous dendritic appendages of neurons linked by dendrodendritic gap junctions. May operate in the control of brain-specific organelle translocations (By similarity).</text>
</comment>
<comment type="subunit">
    <text evidence="7 8">Interacts with CLASP1 and CLASP2 (PubMed:11290329). Binds preferentially to tyrosinated microtubules, and only marginally to detyrosinated microtubules (PubMed:16954346).</text>
</comment>
<comment type="subcellular location">
    <subcellularLocation>
        <location evidence="2">Cytoplasm</location>
    </subcellularLocation>
    <subcellularLocation>
        <location evidence="8">Cytoplasm</location>
        <location evidence="8">Cytoskeleton</location>
    </subcellularLocation>
    <text evidence="8">Localizes preferentially to the ends of tyrosinated microtubules.</text>
</comment>
<comment type="alternative products">
    <event type="alternative splicing"/>
    <isoform>
        <id>Q9Z0H8-1</id>
        <name>1</name>
        <sequence type="displayed"/>
    </isoform>
    <isoform>
        <id>Q9Z0H8-2</id>
        <name>2</name>
        <sequence type="described" ref="VSP_015683"/>
    </isoform>
</comment>
<comment type="tissue specificity">
    <text evidence="9">Expressed in the brain, and very low levels in kidneys.</text>
</comment>
<comment type="developmental stage">
    <text evidence="9">Expressed at 10.5 dpc, expression declines until birth after which it suddenly increases. Expression gradually decreases until postnatal day 10, (the day when DLBs start to occur), then again increases and reaches the levels present in adult brain.</text>
</comment>
<gene>
    <name type="primary">Clip2</name>
    <name type="synonym">Cyln2</name>
    <name type="synonym">Kiaa0291</name>
</gene>
<proteinExistence type="evidence at protein level"/>
<name>CLIP2_MOUSE</name>
<accession>Q9Z0H8</accession>
<accession>Q7TSI9</accession>
<accession>Q8CHU1</accession>
<accession>Q9EP81</accession>
<sequence length="1047" mass="115910">MQKPSGLKPPGRGGKHSSPVGRPSVGSASSSVVASTSGSKEGSPLHKQASGPSSSGAATTVSEKPGPKAAEVGDDFLGDFVVGERVWVNGVKPGVVQYLGETQFAPGQWAGVVLDDPVGKNDGAVGGVRYFECPALQGIFTRPSKLTRQPTAEGSGSDTHSVESLTAQNLSLHSGTATPPLTGRVIPLRESVLNSSVKTGNESGSNLSDSGSVKRGDKDLHLGDRVLVGGTKTGVVRYVGETDFAKGEWCGVELDEPLGKNDGAVAGTRYFQCPPKFGLFAPIHKVIRIGFPSTSPAKAKKTKRMAMGVSALTHSPSSSSISSVSSVASSVGGRPSRSGLLTETSSRYARKISGTTALQEALKEKQQHIEQLLAERDLERAEVAKATSHICEVEKEIALLKAQHEQYVAEAEEKLQRARLLVENVRKEKVDLSNQLEEERRKVEDLQFRVEEESITKGDLETQTQLEHARIGELEQSLLLEKAQAERLLRELADNRLTTVAEKSRVLQLEEELSLRRGEIEELQHCLLQSGPPPADHPEAAETLRLRERLLSASKEHQRDSTLLQDKYEHMLKTYQTEVDKLRAANEKYAQEVADLKAKVQQATTENMGLMDNWKSKLDSLASDHQKSLEDLKATLNSGPGAQQKEIGELKALVEGIKMEHQLELGNLQAKHDLETAMHGKEKEGLRQKLQEVQEELAGLQQHWREQLEEQASQHRLELQEAQDQCRDAQLRAQELEGLDVEYRGQAQAIEFLKEQISLAEKKMLDYEMLQRAEAQSRQEAERLREKLLVAENRLQAAESLCSAQHSHVIESSDLSEETIRMKETVEGLQDKLNKRDKEVTALTSQMDMLRAQVSALENKCKSGEKKIDSLLKEKRRLEAELEAVSRKTHDASGQLVHISQELLRKERSLNELRVLLLEANRHSPGPERDLSREVHKAEWRIKEQKLKDDIRGLREKLTGLDKEKSLSEQRRYSLIDPASPPELLKLQHQLVSTEDALRDALNQAQQVERLVEALRGCSDRTQTISNSGSANGIHQPDKAHKQEDKH</sequence>
<evidence type="ECO:0000250" key="1"/>
<evidence type="ECO:0000250" key="2">
    <source>
        <dbReference type="UniProtKB" id="O55156"/>
    </source>
</evidence>
<evidence type="ECO:0000250" key="3">
    <source>
        <dbReference type="UniProtKB" id="Q9UDT6"/>
    </source>
</evidence>
<evidence type="ECO:0000255" key="4"/>
<evidence type="ECO:0000255" key="5">
    <source>
        <dbReference type="PROSITE-ProRule" id="PRU00045"/>
    </source>
</evidence>
<evidence type="ECO:0000256" key="6">
    <source>
        <dbReference type="SAM" id="MobiDB-lite"/>
    </source>
</evidence>
<evidence type="ECO:0000269" key="7">
    <source>
    </source>
</evidence>
<evidence type="ECO:0000269" key="8">
    <source>
    </source>
</evidence>
<evidence type="ECO:0000269" key="9">
    <source>
    </source>
</evidence>
<evidence type="ECO:0000303" key="10">
    <source>
    </source>
</evidence>
<evidence type="ECO:0000305" key="11"/>
<evidence type="ECO:0007744" key="12">
    <source>
    </source>
</evidence>